<gene>
    <name evidence="1" type="primary">rplM</name>
    <name evidence="1" type="synonym">rpl13</name>
    <name type="ordered locus">PMM1532</name>
</gene>
<feature type="chain" id="PRO_1000055440" description="Large ribosomal subunit protein uL13">
    <location>
        <begin position="1"/>
        <end position="143"/>
    </location>
</feature>
<accession>Q7UZW8</accession>
<comment type="function">
    <text evidence="1">This protein is one of the early assembly proteins of the 50S ribosomal subunit, although it is not seen to bind rRNA by itself. It is important during the early stages of 50S assembly.</text>
</comment>
<comment type="subunit">
    <text evidence="1">Part of the 50S ribosomal subunit.</text>
</comment>
<comment type="similarity">
    <text evidence="1">Belongs to the universal ribosomal protein uL13 family.</text>
</comment>
<organism>
    <name type="scientific">Prochlorococcus marinus subsp. pastoris (strain CCMP1986 / NIES-2087 / MED4)</name>
    <dbReference type="NCBI Taxonomy" id="59919"/>
    <lineage>
        <taxon>Bacteria</taxon>
        <taxon>Bacillati</taxon>
        <taxon>Cyanobacteriota</taxon>
        <taxon>Cyanophyceae</taxon>
        <taxon>Synechococcales</taxon>
        <taxon>Prochlorococcaceae</taxon>
        <taxon>Prochlorococcus</taxon>
    </lineage>
</organism>
<evidence type="ECO:0000255" key="1">
    <source>
        <dbReference type="HAMAP-Rule" id="MF_01366"/>
    </source>
</evidence>
<evidence type="ECO:0000305" key="2"/>
<dbReference type="EMBL" id="BX548174">
    <property type="protein sequence ID" value="CAE19991.1"/>
    <property type="molecule type" value="Genomic_DNA"/>
</dbReference>
<dbReference type="RefSeq" id="WP_011133160.1">
    <property type="nucleotide sequence ID" value="NC_005072.1"/>
</dbReference>
<dbReference type="SMR" id="Q7UZW8"/>
<dbReference type="STRING" id="59919.PMM1532"/>
<dbReference type="KEGG" id="pmm:PMM1532"/>
<dbReference type="eggNOG" id="COG0102">
    <property type="taxonomic scope" value="Bacteria"/>
</dbReference>
<dbReference type="HOGENOM" id="CLU_082184_2_2_3"/>
<dbReference type="OrthoDB" id="9801330at2"/>
<dbReference type="Proteomes" id="UP000001026">
    <property type="component" value="Chromosome"/>
</dbReference>
<dbReference type="GO" id="GO:0022625">
    <property type="term" value="C:cytosolic large ribosomal subunit"/>
    <property type="evidence" value="ECO:0007669"/>
    <property type="project" value="TreeGrafter"/>
</dbReference>
<dbReference type="GO" id="GO:0003729">
    <property type="term" value="F:mRNA binding"/>
    <property type="evidence" value="ECO:0007669"/>
    <property type="project" value="TreeGrafter"/>
</dbReference>
<dbReference type="GO" id="GO:0003735">
    <property type="term" value="F:structural constituent of ribosome"/>
    <property type="evidence" value="ECO:0007669"/>
    <property type="project" value="InterPro"/>
</dbReference>
<dbReference type="GO" id="GO:0017148">
    <property type="term" value="P:negative regulation of translation"/>
    <property type="evidence" value="ECO:0007669"/>
    <property type="project" value="TreeGrafter"/>
</dbReference>
<dbReference type="GO" id="GO:0006412">
    <property type="term" value="P:translation"/>
    <property type="evidence" value="ECO:0007669"/>
    <property type="project" value="UniProtKB-UniRule"/>
</dbReference>
<dbReference type="CDD" id="cd00392">
    <property type="entry name" value="Ribosomal_L13"/>
    <property type="match status" value="1"/>
</dbReference>
<dbReference type="FunFam" id="3.90.1180.10:FF:000001">
    <property type="entry name" value="50S ribosomal protein L13"/>
    <property type="match status" value="1"/>
</dbReference>
<dbReference type="Gene3D" id="3.90.1180.10">
    <property type="entry name" value="Ribosomal protein L13"/>
    <property type="match status" value="1"/>
</dbReference>
<dbReference type="HAMAP" id="MF_01366">
    <property type="entry name" value="Ribosomal_uL13"/>
    <property type="match status" value="1"/>
</dbReference>
<dbReference type="InterPro" id="IPR005822">
    <property type="entry name" value="Ribosomal_uL13"/>
</dbReference>
<dbReference type="InterPro" id="IPR005823">
    <property type="entry name" value="Ribosomal_uL13_bac-type"/>
</dbReference>
<dbReference type="InterPro" id="IPR023563">
    <property type="entry name" value="Ribosomal_uL13_CS"/>
</dbReference>
<dbReference type="InterPro" id="IPR036899">
    <property type="entry name" value="Ribosomal_uL13_sf"/>
</dbReference>
<dbReference type="NCBIfam" id="TIGR01066">
    <property type="entry name" value="rplM_bact"/>
    <property type="match status" value="1"/>
</dbReference>
<dbReference type="PANTHER" id="PTHR11545:SF2">
    <property type="entry name" value="LARGE RIBOSOMAL SUBUNIT PROTEIN UL13M"/>
    <property type="match status" value="1"/>
</dbReference>
<dbReference type="PANTHER" id="PTHR11545">
    <property type="entry name" value="RIBOSOMAL PROTEIN L13"/>
    <property type="match status" value="1"/>
</dbReference>
<dbReference type="Pfam" id="PF00572">
    <property type="entry name" value="Ribosomal_L13"/>
    <property type="match status" value="1"/>
</dbReference>
<dbReference type="PIRSF" id="PIRSF002181">
    <property type="entry name" value="Ribosomal_L13"/>
    <property type="match status" value="1"/>
</dbReference>
<dbReference type="SUPFAM" id="SSF52161">
    <property type="entry name" value="Ribosomal protein L13"/>
    <property type="match status" value="1"/>
</dbReference>
<dbReference type="PROSITE" id="PS00783">
    <property type="entry name" value="RIBOSOMAL_L13"/>
    <property type="match status" value="1"/>
</dbReference>
<keyword id="KW-0687">Ribonucleoprotein</keyword>
<keyword id="KW-0689">Ribosomal protein</keyword>
<name>RL13_PROMP</name>
<proteinExistence type="inferred from homology"/>
<sequence>MNKTITPSIETIERNWFLVDAKDKTLGRLSTEIAAVLRGKNKPTFTPHLDTGDFVIVVNAEKVEVTGKKASQKLYRRHSGRPGGMKVEKFESLQERIPERIIEQAVKGMLPHNSLGRQQFKKLKVYKGSDHPHAAQNPVLLNS</sequence>
<reference key="1">
    <citation type="journal article" date="2003" name="Nature">
        <title>Genome divergence in two Prochlorococcus ecotypes reflects oceanic niche differentiation.</title>
        <authorList>
            <person name="Rocap G."/>
            <person name="Larimer F.W."/>
            <person name="Lamerdin J.E."/>
            <person name="Malfatti S."/>
            <person name="Chain P."/>
            <person name="Ahlgren N.A."/>
            <person name="Arellano A."/>
            <person name="Coleman M."/>
            <person name="Hauser L."/>
            <person name="Hess W.R."/>
            <person name="Johnson Z.I."/>
            <person name="Land M.L."/>
            <person name="Lindell D."/>
            <person name="Post A.F."/>
            <person name="Regala W."/>
            <person name="Shah M."/>
            <person name="Shaw S.L."/>
            <person name="Steglich C."/>
            <person name="Sullivan M.B."/>
            <person name="Ting C.S."/>
            <person name="Tolonen A."/>
            <person name="Webb E.A."/>
            <person name="Zinser E.R."/>
            <person name="Chisholm S.W."/>
        </authorList>
    </citation>
    <scope>NUCLEOTIDE SEQUENCE [LARGE SCALE GENOMIC DNA]</scope>
    <source>
        <strain>CCMP1986 / NIES-2087 / MED4</strain>
    </source>
</reference>
<protein>
    <recommendedName>
        <fullName evidence="1">Large ribosomal subunit protein uL13</fullName>
    </recommendedName>
    <alternativeName>
        <fullName evidence="2">50S ribosomal protein L13</fullName>
    </alternativeName>
</protein>